<evidence type="ECO:0000255" key="1">
    <source>
        <dbReference type="HAMAP-Rule" id="MF_01193"/>
    </source>
</evidence>
<evidence type="ECO:0000255" key="2">
    <source>
        <dbReference type="PROSITE-ProRule" id="PRU01076"/>
    </source>
</evidence>
<name>SYME_SHIF8</name>
<comment type="function">
    <text evidence="1">Involved in the degradation and recycling of damaged RNA. It is itself a target for degradation by the ATP-dependent protease Lon.</text>
</comment>
<comment type="subcellular location">
    <subcellularLocation>
        <location evidence="1">Cytoplasm</location>
    </subcellularLocation>
</comment>
<comment type="similarity">
    <text evidence="1">Belongs to the SymE family.</text>
</comment>
<reference key="1">
    <citation type="journal article" date="2006" name="BMC Genomics">
        <title>Complete genome sequence of Shigella flexneri 5b and comparison with Shigella flexneri 2a.</title>
        <authorList>
            <person name="Nie H."/>
            <person name="Yang F."/>
            <person name="Zhang X."/>
            <person name="Yang J."/>
            <person name="Chen L."/>
            <person name="Wang J."/>
            <person name="Xiong Z."/>
            <person name="Peng J."/>
            <person name="Sun L."/>
            <person name="Dong J."/>
            <person name="Xue Y."/>
            <person name="Xu X."/>
            <person name="Chen S."/>
            <person name="Yao Z."/>
            <person name="Shen Y."/>
            <person name="Jin Q."/>
        </authorList>
    </citation>
    <scope>NUCLEOTIDE SEQUENCE [LARGE SCALE GENOMIC DNA]</scope>
    <source>
        <strain>8401</strain>
    </source>
</reference>
<sequence length="113" mass="12294">MTDTHSIAQPLEAEVSPANNRQLTVSYASRYPDYSRIPAITLKGQWLEAAGFATGTAVDVKVMEGCIVLTAQPAAAEESELMQSLRKVCKLSARKQRQVQEFIGVITGKQKVA</sequence>
<organism>
    <name type="scientific">Shigella flexneri serotype 5b (strain 8401)</name>
    <dbReference type="NCBI Taxonomy" id="373384"/>
    <lineage>
        <taxon>Bacteria</taxon>
        <taxon>Pseudomonadati</taxon>
        <taxon>Pseudomonadota</taxon>
        <taxon>Gammaproteobacteria</taxon>
        <taxon>Enterobacterales</taxon>
        <taxon>Enterobacteriaceae</taxon>
        <taxon>Shigella</taxon>
    </lineage>
</organism>
<dbReference type="EC" id="3.1.-.-" evidence="1"/>
<dbReference type="EMBL" id="CP000266">
    <property type="protein sequence ID" value="ABF06338.1"/>
    <property type="molecule type" value="Genomic_DNA"/>
</dbReference>
<dbReference type="RefSeq" id="WP_000132640.1">
    <property type="nucleotide sequence ID" value="NC_008258.1"/>
</dbReference>
<dbReference type="SMR" id="Q0SX77"/>
<dbReference type="KEGG" id="sfv:SFV_4364"/>
<dbReference type="HOGENOM" id="CLU_151239_0_0_6"/>
<dbReference type="Proteomes" id="UP000000659">
    <property type="component" value="Chromosome"/>
</dbReference>
<dbReference type="GO" id="GO:0005737">
    <property type="term" value="C:cytoplasm"/>
    <property type="evidence" value="ECO:0007669"/>
    <property type="project" value="UniProtKB-SubCell"/>
</dbReference>
<dbReference type="GO" id="GO:0003677">
    <property type="term" value="F:DNA binding"/>
    <property type="evidence" value="ECO:0007669"/>
    <property type="project" value="UniProtKB-KW"/>
</dbReference>
<dbReference type="GO" id="GO:0003723">
    <property type="term" value="F:RNA binding"/>
    <property type="evidence" value="ECO:0007669"/>
    <property type="project" value="UniProtKB-KW"/>
</dbReference>
<dbReference type="GO" id="GO:0004521">
    <property type="term" value="F:RNA endonuclease activity"/>
    <property type="evidence" value="ECO:0007669"/>
    <property type="project" value="UniProtKB-UniRule"/>
</dbReference>
<dbReference type="GO" id="GO:0016070">
    <property type="term" value="P:RNA metabolic process"/>
    <property type="evidence" value="ECO:0007669"/>
    <property type="project" value="InterPro"/>
</dbReference>
<dbReference type="HAMAP" id="MF_01193">
    <property type="entry name" value="Endoribonucl_SymE"/>
    <property type="match status" value="1"/>
</dbReference>
<dbReference type="InterPro" id="IPR007159">
    <property type="entry name" value="SpoVT-AbrB_dom"/>
</dbReference>
<dbReference type="InterPro" id="IPR014944">
    <property type="entry name" value="Toxin_SymE-like"/>
</dbReference>
<dbReference type="InterPro" id="IPR020883">
    <property type="entry name" value="TypeI_TA_SymE"/>
</dbReference>
<dbReference type="NCBIfam" id="NF010128">
    <property type="entry name" value="PRK13605.1"/>
    <property type="match status" value="1"/>
</dbReference>
<dbReference type="Pfam" id="PF08845">
    <property type="entry name" value="SymE_toxin"/>
    <property type="match status" value="1"/>
</dbReference>
<dbReference type="PROSITE" id="PS51740">
    <property type="entry name" value="SPOVT_ABRB"/>
    <property type="match status" value="1"/>
</dbReference>
<gene>
    <name evidence="1" type="primary">symE</name>
    <name type="ordered locus">SFV_4364</name>
</gene>
<protein>
    <recommendedName>
        <fullName evidence="1">Endoribonuclease SymE</fullName>
        <ecNumber evidence="1">3.1.-.-</ecNumber>
    </recommendedName>
</protein>
<accession>Q0SX77</accession>
<proteinExistence type="inferred from homology"/>
<keyword id="KW-0963">Cytoplasm</keyword>
<keyword id="KW-0238">DNA-binding</keyword>
<keyword id="KW-0255">Endonuclease</keyword>
<keyword id="KW-0378">Hydrolase</keyword>
<keyword id="KW-0540">Nuclease</keyword>
<keyword id="KW-0694">RNA-binding</keyword>
<feature type="chain" id="PRO_0000297827" description="Endoribonuclease SymE">
    <location>
        <begin position="1"/>
        <end position="113"/>
    </location>
</feature>
<feature type="domain" description="SpoVT-AbrB" evidence="2">
    <location>
        <begin position="29"/>
        <end position="74"/>
    </location>
</feature>